<protein>
    <recommendedName>
        <fullName evidence="1">Thiamine-phosphate synthase</fullName>
        <shortName evidence="1">TP synthase</shortName>
        <shortName evidence="1">TPS</shortName>
        <ecNumber evidence="1">2.5.1.3</ecNumber>
    </recommendedName>
    <alternativeName>
        <fullName evidence="1">Thiamine-phosphate pyrophosphorylase</fullName>
        <shortName evidence="1">TMP pyrophosphorylase</shortName>
        <shortName evidence="1">TMP-PPase</shortName>
    </alternativeName>
</protein>
<sequence length="214" mass="23532">MQDMRLQGLYGISESGWYKRPHEAIELLLEAIEGGMKIFQLREKEGSDEEILPLARALWNHCRQKGVLFILNDRLDLALSLGVDGVHLGIDDAEASRARILLPHGIIGISCYGDLDRAHKAKEEGASYVAFGSCFPSPTKPASSVIDLTLFKKAQEELAIPLCAIGGIEAQNVGELIHCDMIAVISSLWSGGVAQVRKNAKGLIQSWRENRERV</sequence>
<dbReference type="EC" id="2.5.1.3" evidence="1"/>
<dbReference type="EMBL" id="BX571659">
    <property type="protein sequence ID" value="CAE09902.1"/>
    <property type="molecule type" value="Genomic_DNA"/>
</dbReference>
<dbReference type="RefSeq" id="WP_011138699.1">
    <property type="nucleotide sequence ID" value="NC_005090.1"/>
</dbReference>
<dbReference type="SMR" id="Q7M9N9"/>
<dbReference type="STRING" id="273121.WS0788"/>
<dbReference type="KEGG" id="wsu:WS0788"/>
<dbReference type="eggNOG" id="COG0352">
    <property type="taxonomic scope" value="Bacteria"/>
</dbReference>
<dbReference type="HOGENOM" id="CLU_018272_3_1_7"/>
<dbReference type="UniPathway" id="UPA00060">
    <property type="reaction ID" value="UER00141"/>
</dbReference>
<dbReference type="Proteomes" id="UP000000422">
    <property type="component" value="Chromosome"/>
</dbReference>
<dbReference type="GO" id="GO:0005737">
    <property type="term" value="C:cytoplasm"/>
    <property type="evidence" value="ECO:0007669"/>
    <property type="project" value="TreeGrafter"/>
</dbReference>
<dbReference type="GO" id="GO:0000287">
    <property type="term" value="F:magnesium ion binding"/>
    <property type="evidence" value="ECO:0007669"/>
    <property type="project" value="UniProtKB-UniRule"/>
</dbReference>
<dbReference type="GO" id="GO:0004789">
    <property type="term" value="F:thiamine-phosphate diphosphorylase activity"/>
    <property type="evidence" value="ECO:0007669"/>
    <property type="project" value="UniProtKB-UniRule"/>
</dbReference>
<dbReference type="GO" id="GO:0009228">
    <property type="term" value="P:thiamine biosynthetic process"/>
    <property type="evidence" value="ECO:0007669"/>
    <property type="project" value="UniProtKB-KW"/>
</dbReference>
<dbReference type="GO" id="GO:0009229">
    <property type="term" value="P:thiamine diphosphate biosynthetic process"/>
    <property type="evidence" value="ECO:0007669"/>
    <property type="project" value="UniProtKB-UniRule"/>
</dbReference>
<dbReference type="CDD" id="cd00564">
    <property type="entry name" value="TMP_TenI"/>
    <property type="match status" value="1"/>
</dbReference>
<dbReference type="Gene3D" id="3.20.20.70">
    <property type="entry name" value="Aldolase class I"/>
    <property type="match status" value="1"/>
</dbReference>
<dbReference type="HAMAP" id="MF_00097">
    <property type="entry name" value="TMP_synthase"/>
    <property type="match status" value="1"/>
</dbReference>
<dbReference type="InterPro" id="IPR013785">
    <property type="entry name" value="Aldolase_TIM"/>
</dbReference>
<dbReference type="InterPro" id="IPR036206">
    <property type="entry name" value="ThiamineP_synth_sf"/>
</dbReference>
<dbReference type="InterPro" id="IPR022998">
    <property type="entry name" value="ThiamineP_synth_TenI"/>
</dbReference>
<dbReference type="InterPro" id="IPR034291">
    <property type="entry name" value="TMP_synthase"/>
</dbReference>
<dbReference type="NCBIfam" id="TIGR00693">
    <property type="entry name" value="thiE"/>
    <property type="match status" value="1"/>
</dbReference>
<dbReference type="PANTHER" id="PTHR20857">
    <property type="entry name" value="THIAMINE-PHOSPHATE PYROPHOSPHORYLASE"/>
    <property type="match status" value="1"/>
</dbReference>
<dbReference type="PANTHER" id="PTHR20857:SF15">
    <property type="entry name" value="THIAMINE-PHOSPHATE SYNTHASE"/>
    <property type="match status" value="1"/>
</dbReference>
<dbReference type="Pfam" id="PF02581">
    <property type="entry name" value="TMP-TENI"/>
    <property type="match status" value="1"/>
</dbReference>
<dbReference type="SUPFAM" id="SSF51391">
    <property type="entry name" value="Thiamin phosphate synthase"/>
    <property type="match status" value="1"/>
</dbReference>
<comment type="function">
    <text evidence="1">Condenses 4-methyl-5-(beta-hydroxyethyl)thiazole monophosphate (THZ-P) and 2-methyl-4-amino-5-hydroxymethyl pyrimidine pyrophosphate (HMP-PP) to form thiamine monophosphate (TMP).</text>
</comment>
<comment type="catalytic activity">
    <reaction evidence="1">
        <text>2-[(2R,5Z)-2-carboxy-4-methylthiazol-5(2H)-ylidene]ethyl phosphate + 4-amino-2-methyl-5-(diphosphooxymethyl)pyrimidine + 2 H(+) = thiamine phosphate + CO2 + diphosphate</text>
        <dbReference type="Rhea" id="RHEA:47844"/>
        <dbReference type="ChEBI" id="CHEBI:15378"/>
        <dbReference type="ChEBI" id="CHEBI:16526"/>
        <dbReference type="ChEBI" id="CHEBI:33019"/>
        <dbReference type="ChEBI" id="CHEBI:37575"/>
        <dbReference type="ChEBI" id="CHEBI:57841"/>
        <dbReference type="ChEBI" id="CHEBI:62899"/>
        <dbReference type="EC" id="2.5.1.3"/>
    </reaction>
</comment>
<comment type="catalytic activity">
    <reaction evidence="1">
        <text>2-(2-carboxy-4-methylthiazol-5-yl)ethyl phosphate + 4-amino-2-methyl-5-(diphosphooxymethyl)pyrimidine + 2 H(+) = thiamine phosphate + CO2 + diphosphate</text>
        <dbReference type="Rhea" id="RHEA:47848"/>
        <dbReference type="ChEBI" id="CHEBI:15378"/>
        <dbReference type="ChEBI" id="CHEBI:16526"/>
        <dbReference type="ChEBI" id="CHEBI:33019"/>
        <dbReference type="ChEBI" id="CHEBI:37575"/>
        <dbReference type="ChEBI" id="CHEBI:57841"/>
        <dbReference type="ChEBI" id="CHEBI:62890"/>
        <dbReference type="EC" id="2.5.1.3"/>
    </reaction>
</comment>
<comment type="catalytic activity">
    <reaction evidence="1">
        <text>4-methyl-5-(2-phosphooxyethyl)-thiazole + 4-amino-2-methyl-5-(diphosphooxymethyl)pyrimidine + H(+) = thiamine phosphate + diphosphate</text>
        <dbReference type="Rhea" id="RHEA:22328"/>
        <dbReference type="ChEBI" id="CHEBI:15378"/>
        <dbReference type="ChEBI" id="CHEBI:33019"/>
        <dbReference type="ChEBI" id="CHEBI:37575"/>
        <dbReference type="ChEBI" id="CHEBI:57841"/>
        <dbReference type="ChEBI" id="CHEBI:58296"/>
        <dbReference type="EC" id="2.5.1.3"/>
    </reaction>
</comment>
<comment type="cofactor">
    <cofactor evidence="1">
        <name>Mg(2+)</name>
        <dbReference type="ChEBI" id="CHEBI:18420"/>
    </cofactor>
    <text evidence="1">Binds 1 Mg(2+) ion per subunit.</text>
</comment>
<comment type="pathway">
    <text evidence="1">Cofactor biosynthesis; thiamine diphosphate biosynthesis; thiamine phosphate from 4-amino-2-methyl-5-diphosphomethylpyrimidine and 4-methyl-5-(2-phosphoethyl)-thiazole: step 1/1.</text>
</comment>
<comment type="similarity">
    <text evidence="1">Belongs to the thiamine-phosphate synthase family.</text>
</comment>
<reference key="1">
    <citation type="journal article" date="2003" name="Proc. Natl. Acad. Sci. U.S.A.">
        <title>Complete genome sequence and analysis of Wolinella succinogenes.</title>
        <authorList>
            <person name="Baar C."/>
            <person name="Eppinger M."/>
            <person name="Raddatz G."/>
            <person name="Simon J."/>
            <person name="Lanz C."/>
            <person name="Klimmek O."/>
            <person name="Nandakumar R."/>
            <person name="Gross R."/>
            <person name="Rosinus A."/>
            <person name="Keller H."/>
            <person name="Jagtap P."/>
            <person name="Linke B."/>
            <person name="Meyer F."/>
            <person name="Lederer H."/>
            <person name="Schuster S.C."/>
        </authorList>
    </citation>
    <scope>NUCLEOTIDE SEQUENCE [LARGE SCALE GENOMIC DNA]</scope>
    <source>
        <strain>ATCC 29543 / DSM 1740 / CCUG 13145 / JCM 31913 / LMG 7466 / NCTC 11488 / FDC 602W</strain>
    </source>
</reference>
<evidence type="ECO:0000255" key="1">
    <source>
        <dbReference type="HAMAP-Rule" id="MF_00097"/>
    </source>
</evidence>
<keyword id="KW-0460">Magnesium</keyword>
<keyword id="KW-0479">Metal-binding</keyword>
<keyword id="KW-1185">Reference proteome</keyword>
<keyword id="KW-0784">Thiamine biosynthesis</keyword>
<keyword id="KW-0808">Transferase</keyword>
<organism>
    <name type="scientific">Wolinella succinogenes (strain ATCC 29543 / DSM 1740 / CCUG 13145 / JCM 31913 / LMG 7466 / NCTC 11488 / FDC 602W)</name>
    <name type="common">Vibrio succinogenes</name>
    <dbReference type="NCBI Taxonomy" id="273121"/>
    <lineage>
        <taxon>Bacteria</taxon>
        <taxon>Pseudomonadati</taxon>
        <taxon>Campylobacterota</taxon>
        <taxon>Epsilonproteobacteria</taxon>
        <taxon>Campylobacterales</taxon>
        <taxon>Helicobacteraceae</taxon>
        <taxon>Wolinella</taxon>
    </lineage>
</organism>
<accession>Q7M9N9</accession>
<gene>
    <name evidence="1" type="primary">thiE</name>
    <name type="ordered locus">WS0788</name>
</gene>
<name>THIE_WOLSU</name>
<proteinExistence type="inferred from homology"/>
<feature type="chain" id="PRO_0000157061" description="Thiamine-phosphate synthase">
    <location>
        <begin position="1"/>
        <end position="214"/>
    </location>
</feature>
<feature type="binding site" evidence="1">
    <location>
        <begin position="40"/>
        <end position="44"/>
    </location>
    <ligand>
        <name>4-amino-2-methyl-5-(diphosphooxymethyl)pyrimidine</name>
        <dbReference type="ChEBI" id="CHEBI:57841"/>
    </ligand>
</feature>
<feature type="binding site" evidence="1">
    <location>
        <position position="72"/>
    </location>
    <ligand>
        <name>4-amino-2-methyl-5-(diphosphooxymethyl)pyrimidine</name>
        <dbReference type="ChEBI" id="CHEBI:57841"/>
    </ligand>
</feature>
<feature type="binding site" evidence="1">
    <location>
        <position position="73"/>
    </location>
    <ligand>
        <name>Mg(2+)</name>
        <dbReference type="ChEBI" id="CHEBI:18420"/>
    </ligand>
</feature>
<feature type="binding site" evidence="1">
    <location>
        <position position="92"/>
    </location>
    <ligand>
        <name>Mg(2+)</name>
        <dbReference type="ChEBI" id="CHEBI:18420"/>
    </ligand>
</feature>
<feature type="binding site" evidence="1">
    <location>
        <position position="110"/>
    </location>
    <ligand>
        <name>4-amino-2-methyl-5-(diphosphooxymethyl)pyrimidine</name>
        <dbReference type="ChEBI" id="CHEBI:57841"/>
    </ligand>
</feature>
<feature type="binding site" evidence="1">
    <location>
        <begin position="137"/>
        <end position="139"/>
    </location>
    <ligand>
        <name>2-[(2R,5Z)-2-carboxy-4-methylthiazol-5(2H)-ylidene]ethyl phosphate</name>
        <dbReference type="ChEBI" id="CHEBI:62899"/>
    </ligand>
</feature>
<feature type="binding site" evidence="1">
    <location>
        <position position="140"/>
    </location>
    <ligand>
        <name>4-amino-2-methyl-5-(diphosphooxymethyl)pyrimidine</name>
        <dbReference type="ChEBI" id="CHEBI:57841"/>
    </ligand>
</feature>
<feature type="binding site" evidence="1">
    <location>
        <position position="167"/>
    </location>
    <ligand>
        <name>2-[(2R,5Z)-2-carboxy-4-methylthiazol-5(2H)-ylidene]ethyl phosphate</name>
        <dbReference type="ChEBI" id="CHEBI:62899"/>
    </ligand>
</feature>
<feature type="binding site" evidence="1">
    <location>
        <begin position="185"/>
        <end position="186"/>
    </location>
    <ligand>
        <name>2-[(2R,5Z)-2-carboxy-4-methylthiazol-5(2H)-ylidene]ethyl phosphate</name>
        <dbReference type="ChEBI" id="CHEBI:62899"/>
    </ligand>
</feature>